<gene>
    <name evidence="1" type="primary">gcvP</name>
    <name type="ordered locus">Shewmr7_0624</name>
</gene>
<organism>
    <name type="scientific">Shewanella sp. (strain MR-7)</name>
    <dbReference type="NCBI Taxonomy" id="60481"/>
    <lineage>
        <taxon>Bacteria</taxon>
        <taxon>Pseudomonadati</taxon>
        <taxon>Pseudomonadota</taxon>
        <taxon>Gammaproteobacteria</taxon>
        <taxon>Alteromonadales</taxon>
        <taxon>Shewanellaceae</taxon>
        <taxon>Shewanella</taxon>
    </lineage>
</organism>
<sequence length="962" mass="104821">MTKQTLTQLEQHDLFLRRHIGPDSSQQQEMLNYVGAESLDDLTAQIVPESIRLNQELSIGDSCGEAEGIAYIRGLAKQNQVFKSYIGMGYYGTQVPNVILRNVFENPGWYTAYTPYQPEIAQGRLEAILNFQQVSMDLTGLDLASASLLDEATAAAEAMALAKRVSKAKKANIFFVADDVFPQTLDVVKTRAECFGFEVVVGPAHEAVNHELFGALFQYSNRFGQITDFTDLFAELRAKNVVVTVAADIMSLVLLKSPGAMGADVVFGSAQRFGVPMGFGGPHAAFFVARDEHKRSMPGRIIGVSKDTRGNRALRMAMQTREQHIRREKANSNICTAQILLANMASFYAVFHGPQGLKTIASRINRFTDILAAGLQAKGVSLVNNTWFDTISIKGLDVAAVNARALAAEMNLRFDADGIVGVSLDETTLRTDIEALFDVILGAGHGLDVAALDAQIVAQGSQSIPEALVRQDAILSHPTFNRYQSETEMMRYIKRLESKDLALNYSMISLGSCTMKLNAAVEMLPVSWPEFANMHPFCPLDQAKGYTQLIEELSSWLVNVTGYDAVCIQPNSGAQGEYAGLLAIRKYHESRGEAHRNICLIPQSAHGTNPASAQLAGMQVVVTACDKQGNVDLEDLKAKAAEVAENLSCIMITYPSTHGVYEESIREICNIVHQHGGQVYLDGANMNAQVGLTSPGFIGADVSHLNLHKTFAIPHGGGGPGMGPIGVKAHLAPFVAGHVVVKPGRESDNNGAVSAAPYGSAGILPISWMYIKLLGSNGLKKSTQTALLNANYVMKKLSEHYPVLFRGRNDRVAHECIIDLRPIKEASGVTEMDIAKRLNDYGFHAPTMSFPVAGTLMIEPTESESKVELDRFIDAMVSIRAEIAKVEAGEWPADNNPLHNAPHTMADIMDPAFDSRPYSREVAVFPSAAVRTNKFWPTVNRIDDVYGDRNLFCACVPLSDYE</sequence>
<proteinExistence type="inferred from homology"/>
<keyword id="KW-0560">Oxidoreductase</keyword>
<keyword id="KW-0663">Pyridoxal phosphate</keyword>
<name>GCSP_SHESR</name>
<evidence type="ECO:0000255" key="1">
    <source>
        <dbReference type="HAMAP-Rule" id="MF_00711"/>
    </source>
</evidence>
<feature type="chain" id="PRO_1000045614" description="Glycine dehydrogenase (decarboxylating)">
    <location>
        <begin position="1"/>
        <end position="962"/>
    </location>
</feature>
<feature type="modified residue" description="N6-(pyridoxal phosphate)lysine" evidence="1">
    <location>
        <position position="709"/>
    </location>
</feature>
<accession>Q0HZ28</accession>
<reference key="1">
    <citation type="submission" date="2006-08" db="EMBL/GenBank/DDBJ databases">
        <title>Complete sequence of chromosome 1 of Shewanella sp. MR-7.</title>
        <authorList>
            <person name="Copeland A."/>
            <person name="Lucas S."/>
            <person name="Lapidus A."/>
            <person name="Barry K."/>
            <person name="Detter J.C."/>
            <person name="Glavina del Rio T."/>
            <person name="Hammon N."/>
            <person name="Israni S."/>
            <person name="Dalin E."/>
            <person name="Tice H."/>
            <person name="Pitluck S."/>
            <person name="Kiss H."/>
            <person name="Brettin T."/>
            <person name="Bruce D."/>
            <person name="Han C."/>
            <person name="Tapia R."/>
            <person name="Gilna P."/>
            <person name="Schmutz J."/>
            <person name="Larimer F."/>
            <person name="Land M."/>
            <person name="Hauser L."/>
            <person name="Kyrpides N."/>
            <person name="Mikhailova N."/>
            <person name="Nealson K."/>
            <person name="Konstantinidis K."/>
            <person name="Klappenbach J."/>
            <person name="Tiedje J."/>
            <person name="Richardson P."/>
        </authorList>
    </citation>
    <scope>NUCLEOTIDE SEQUENCE [LARGE SCALE GENOMIC DNA]</scope>
    <source>
        <strain>MR-7</strain>
    </source>
</reference>
<protein>
    <recommendedName>
        <fullName evidence="1">Glycine dehydrogenase (decarboxylating)</fullName>
        <ecNumber evidence="1">1.4.4.2</ecNumber>
    </recommendedName>
    <alternativeName>
        <fullName evidence="1">Glycine cleavage system P-protein</fullName>
    </alternativeName>
    <alternativeName>
        <fullName evidence="1">Glycine decarboxylase</fullName>
    </alternativeName>
    <alternativeName>
        <fullName evidence="1">Glycine dehydrogenase (aminomethyl-transferring)</fullName>
    </alternativeName>
</protein>
<dbReference type="EC" id="1.4.4.2" evidence="1"/>
<dbReference type="EMBL" id="CP000444">
    <property type="protein sequence ID" value="ABI41627.1"/>
    <property type="molecule type" value="Genomic_DNA"/>
</dbReference>
<dbReference type="SMR" id="Q0HZ28"/>
<dbReference type="KEGG" id="shm:Shewmr7_0624"/>
<dbReference type="HOGENOM" id="CLU_004620_1_1_6"/>
<dbReference type="GO" id="GO:0005829">
    <property type="term" value="C:cytosol"/>
    <property type="evidence" value="ECO:0007669"/>
    <property type="project" value="TreeGrafter"/>
</dbReference>
<dbReference type="GO" id="GO:0005960">
    <property type="term" value="C:glycine cleavage complex"/>
    <property type="evidence" value="ECO:0007669"/>
    <property type="project" value="TreeGrafter"/>
</dbReference>
<dbReference type="GO" id="GO:0016594">
    <property type="term" value="F:glycine binding"/>
    <property type="evidence" value="ECO:0007669"/>
    <property type="project" value="TreeGrafter"/>
</dbReference>
<dbReference type="GO" id="GO:0004375">
    <property type="term" value="F:glycine dehydrogenase (decarboxylating) activity"/>
    <property type="evidence" value="ECO:0007669"/>
    <property type="project" value="UniProtKB-EC"/>
</dbReference>
<dbReference type="GO" id="GO:0030170">
    <property type="term" value="F:pyridoxal phosphate binding"/>
    <property type="evidence" value="ECO:0007669"/>
    <property type="project" value="TreeGrafter"/>
</dbReference>
<dbReference type="GO" id="GO:0019464">
    <property type="term" value="P:glycine decarboxylation via glycine cleavage system"/>
    <property type="evidence" value="ECO:0007669"/>
    <property type="project" value="UniProtKB-UniRule"/>
</dbReference>
<dbReference type="CDD" id="cd00613">
    <property type="entry name" value="GDC-P"/>
    <property type="match status" value="2"/>
</dbReference>
<dbReference type="FunFam" id="3.40.640.10:FF:000005">
    <property type="entry name" value="Glycine dehydrogenase (decarboxylating), mitochondrial"/>
    <property type="match status" value="1"/>
</dbReference>
<dbReference type="FunFam" id="3.90.1150.10:FF:000007">
    <property type="entry name" value="Glycine dehydrogenase (decarboxylating), mitochondrial"/>
    <property type="match status" value="1"/>
</dbReference>
<dbReference type="FunFam" id="3.40.640.10:FF:000007">
    <property type="entry name" value="glycine dehydrogenase (Decarboxylating), mitochondrial"/>
    <property type="match status" value="1"/>
</dbReference>
<dbReference type="Gene3D" id="3.90.1150.10">
    <property type="entry name" value="Aspartate Aminotransferase, domain 1"/>
    <property type="match status" value="2"/>
</dbReference>
<dbReference type="Gene3D" id="3.40.640.10">
    <property type="entry name" value="Type I PLP-dependent aspartate aminotransferase-like (Major domain)"/>
    <property type="match status" value="2"/>
</dbReference>
<dbReference type="HAMAP" id="MF_00711">
    <property type="entry name" value="GcvP"/>
    <property type="match status" value="1"/>
</dbReference>
<dbReference type="InterPro" id="IPR003437">
    <property type="entry name" value="GcvP"/>
</dbReference>
<dbReference type="InterPro" id="IPR049316">
    <property type="entry name" value="GDC-P_C"/>
</dbReference>
<dbReference type="InterPro" id="IPR049315">
    <property type="entry name" value="GDC-P_N"/>
</dbReference>
<dbReference type="InterPro" id="IPR020581">
    <property type="entry name" value="GDC_P"/>
</dbReference>
<dbReference type="InterPro" id="IPR015424">
    <property type="entry name" value="PyrdxlP-dep_Trfase"/>
</dbReference>
<dbReference type="InterPro" id="IPR015421">
    <property type="entry name" value="PyrdxlP-dep_Trfase_major"/>
</dbReference>
<dbReference type="InterPro" id="IPR015422">
    <property type="entry name" value="PyrdxlP-dep_Trfase_small"/>
</dbReference>
<dbReference type="NCBIfam" id="TIGR00461">
    <property type="entry name" value="gcvP"/>
    <property type="match status" value="1"/>
</dbReference>
<dbReference type="NCBIfam" id="NF003346">
    <property type="entry name" value="PRK04366.1"/>
    <property type="match status" value="1"/>
</dbReference>
<dbReference type="PANTHER" id="PTHR11773:SF13">
    <property type="entry name" value="GLYCINE DEHYDROGENASE (DECARBOXYLATING)"/>
    <property type="match status" value="1"/>
</dbReference>
<dbReference type="PANTHER" id="PTHR11773">
    <property type="entry name" value="GLYCINE DEHYDROGENASE, DECARBOXYLATING"/>
    <property type="match status" value="1"/>
</dbReference>
<dbReference type="Pfam" id="PF21478">
    <property type="entry name" value="GcvP2_C"/>
    <property type="match status" value="1"/>
</dbReference>
<dbReference type="Pfam" id="PF02347">
    <property type="entry name" value="GDC-P"/>
    <property type="match status" value="2"/>
</dbReference>
<dbReference type="SUPFAM" id="SSF53383">
    <property type="entry name" value="PLP-dependent transferases"/>
    <property type="match status" value="2"/>
</dbReference>
<comment type="function">
    <text evidence="1">The glycine cleavage system catalyzes the degradation of glycine. The P protein binds the alpha-amino group of glycine through its pyridoxal phosphate cofactor; CO(2) is released and the remaining methylamine moiety is then transferred to the lipoamide cofactor of the H protein.</text>
</comment>
<comment type="catalytic activity">
    <reaction evidence="1">
        <text>N(6)-[(R)-lipoyl]-L-lysyl-[glycine-cleavage complex H protein] + glycine + H(+) = N(6)-[(R)-S(8)-aminomethyldihydrolipoyl]-L-lysyl-[glycine-cleavage complex H protein] + CO2</text>
        <dbReference type="Rhea" id="RHEA:24304"/>
        <dbReference type="Rhea" id="RHEA-COMP:10494"/>
        <dbReference type="Rhea" id="RHEA-COMP:10495"/>
        <dbReference type="ChEBI" id="CHEBI:15378"/>
        <dbReference type="ChEBI" id="CHEBI:16526"/>
        <dbReference type="ChEBI" id="CHEBI:57305"/>
        <dbReference type="ChEBI" id="CHEBI:83099"/>
        <dbReference type="ChEBI" id="CHEBI:83143"/>
        <dbReference type="EC" id="1.4.4.2"/>
    </reaction>
</comment>
<comment type="cofactor">
    <cofactor evidence="1">
        <name>pyridoxal 5'-phosphate</name>
        <dbReference type="ChEBI" id="CHEBI:597326"/>
    </cofactor>
</comment>
<comment type="subunit">
    <text evidence="1">The glycine cleavage system is composed of four proteins: P, T, L and H.</text>
</comment>
<comment type="similarity">
    <text evidence="1">Belongs to the GcvP family.</text>
</comment>